<reference key="1">
    <citation type="journal article" date="2001" name="Gene">
        <title>Calcium channel gamma subunits provide insights into the evolution of this gene family.</title>
        <authorList>
            <person name="Chu P.-J."/>
            <person name="Robertson H.M."/>
            <person name="Best P.M."/>
        </authorList>
    </citation>
    <scope>NUCLEOTIDE SEQUENCE [MRNA]</scope>
    <source>
        <strain>BALB/cJ</strain>
    </source>
</reference>
<reference key="2">
    <citation type="journal article" date="2010" name="Cell">
        <title>A tissue-specific atlas of mouse protein phosphorylation and expression.</title>
        <authorList>
            <person name="Huttlin E.L."/>
            <person name="Jedrychowski M.P."/>
            <person name="Elias J.E."/>
            <person name="Goswami T."/>
            <person name="Rad R."/>
            <person name="Beausoleil S.A."/>
            <person name="Villen J."/>
            <person name="Haas W."/>
            <person name="Sowa M.E."/>
            <person name="Gygi S.P."/>
        </authorList>
    </citation>
    <scope>PHOSPHORYLATION [LARGE SCALE ANALYSIS] AT SER-251 AND SER-254</scope>
    <scope>IDENTIFICATION BY MASS SPECTROMETRY [LARGE SCALE ANALYSIS]</scope>
    <source>
        <tissue>Brain</tissue>
    </source>
</reference>
<reference key="3">
    <citation type="journal article" date="2010" name="Neuron">
        <title>Hippocampal AMPA receptor gating controlled by both TARP and cornichon proteins.</title>
        <authorList>
            <person name="Kato A.S."/>
            <person name="Gill M.B."/>
            <person name="Ho M.T."/>
            <person name="Yu H."/>
            <person name="Tu Y."/>
            <person name="Siuda E.R."/>
            <person name="Wang H."/>
            <person name="Qian Y.W."/>
            <person name="Nisenbaum E.S."/>
            <person name="Tomita S."/>
            <person name="Bredt D.S."/>
        </authorList>
    </citation>
    <scope>FUNCTION</scope>
    <scope>SUBCELLULAR LOCATION</scope>
    <scope>INTERACTION WITH CNIH2</scope>
</reference>
<reference key="4">
    <citation type="journal article" date="2011" name="FASEB J.">
        <title>Cardiac L-type calcium channel (Cav1.2) associates with gamma subunits.</title>
        <authorList>
            <person name="Yang L."/>
            <person name="Katchman A."/>
            <person name="Morrow J.P."/>
            <person name="Doshi D."/>
            <person name="Marx S.O."/>
        </authorList>
    </citation>
    <scope>FUNCTION</scope>
    <scope>IDENTIFICATION IN A COMPLEX WITH CACNA1C</scope>
    <scope>SUBUNIT</scope>
    <scope>SUBCELLULAR LOCATION</scope>
</reference>
<reference key="5">
    <citation type="journal article" date="2021" name="Nature">
        <title>Hippocampal AMPA receptor assemblies and mechanism of allosteric inhibition.</title>
        <authorList>
            <person name="Yu J."/>
            <person name="Rao P."/>
            <person name="Clark S."/>
            <person name="Mitra J."/>
            <person name="Ha T."/>
            <person name="Gouaux E."/>
        </authorList>
    </citation>
    <scope>SUBUNIT</scope>
</reference>
<name>CCG8_MOUSE</name>
<organism>
    <name type="scientific">Mus musculus</name>
    <name type="common">Mouse</name>
    <dbReference type="NCBI Taxonomy" id="10090"/>
    <lineage>
        <taxon>Eukaryota</taxon>
        <taxon>Metazoa</taxon>
        <taxon>Chordata</taxon>
        <taxon>Craniata</taxon>
        <taxon>Vertebrata</taxon>
        <taxon>Euteleostomi</taxon>
        <taxon>Mammalia</taxon>
        <taxon>Eutheria</taxon>
        <taxon>Euarchontoglires</taxon>
        <taxon>Glires</taxon>
        <taxon>Rodentia</taxon>
        <taxon>Myomorpha</taxon>
        <taxon>Muroidea</taxon>
        <taxon>Muridae</taxon>
        <taxon>Murinae</taxon>
        <taxon>Mus</taxon>
        <taxon>Mus</taxon>
    </lineage>
</organism>
<keyword id="KW-0002">3D-structure</keyword>
<keyword id="KW-0106">Calcium</keyword>
<keyword id="KW-0107">Calcium channel</keyword>
<keyword id="KW-0109">Calcium transport</keyword>
<keyword id="KW-1003">Cell membrane</keyword>
<keyword id="KW-0407">Ion channel</keyword>
<keyword id="KW-0406">Ion transport</keyword>
<keyword id="KW-0449">Lipoprotein</keyword>
<keyword id="KW-0472">Membrane</keyword>
<keyword id="KW-0564">Palmitate</keyword>
<keyword id="KW-0597">Phosphoprotein</keyword>
<keyword id="KW-0628">Postsynaptic cell membrane</keyword>
<keyword id="KW-1185">Reference proteome</keyword>
<keyword id="KW-0770">Synapse</keyword>
<keyword id="KW-0812">Transmembrane</keyword>
<keyword id="KW-1133">Transmembrane helix</keyword>
<keyword id="KW-0813">Transport</keyword>
<keyword id="KW-0851">Voltage-gated channel</keyword>
<comment type="function">
    <text evidence="5 6">Regulates the activity of L-type calcium channels that contain CACNA1C as pore-forming subunit (PubMed:21127204). Regulates the trafficking and gating properties of AMPA-selective glutamate receptors (AMPARs). Promotes their targeting to the cell membrane and synapses and modulates their gating properties by slowing their rates of activation, deactivation and desensitization and by mediating their resensitization. Does not show subunit-specific AMPA receptor regulation and regulates all AMPAR subunits. Thought to stabilize the calcium channel in an inactivated (closed) state.</text>
</comment>
<comment type="subunit">
    <text evidence="5 6 7">Interacts with CACNA1C. Identified in a complex with the L-type calcium channel subunits CACNA1C, CACNA2D1 and either CACNB1 or CACNB2 (PubMed:21127204). Acts as an auxiliary subunit for AMPA-selective glutamate receptors (AMPARs). Found in a complex with GRIA1, GRIA2, GRIA3, GRIA4, CNIH2, CNIH3, CACNG2, CACNG3, CACNG4, CACNG5 and CACNG7. Interacts with CNIH2. Found in a complex with GRIA1, GRIA2, GRIA3, GRIA4, DLG4 and CNIH2 (PubMed:33981040).</text>
</comment>
<comment type="subcellular location">
    <subcellularLocation>
        <location evidence="9 10">Cell membrane</location>
        <topology evidence="1">Multi-pass membrane protein</topology>
    </subcellularLocation>
    <subcellularLocation>
        <location evidence="6">Postsynaptic density membrane</location>
    </subcellularLocation>
</comment>
<comment type="PTM">
    <text evidence="2">Palmitoylated. Probably palmitoylated by ZDHHC3 and ZDHHC7.</text>
</comment>
<comment type="similarity">
    <text evidence="8">Belongs to the PMP-22/EMP/MP20 family. CACNG subfamily.</text>
</comment>
<accession>Q8VHW2</accession>
<evidence type="ECO:0000250" key="1"/>
<evidence type="ECO:0000250" key="2">
    <source>
        <dbReference type="UniProtKB" id="Q8VHW5"/>
    </source>
</evidence>
<evidence type="ECO:0000255" key="3"/>
<evidence type="ECO:0000256" key="4">
    <source>
        <dbReference type="SAM" id="MobiDB-lite"/>
    </source>
</evidence>
<evidence type="ECO:0000269" key="5">
    <source>
    </source>
</evidence>
<evidence type="ECO:0000269" key="6">
    <source>
    </source>
</evidence>
<evidence type="ECO:0000269" key="7">
    <source>
    </source>
</evidence>
<evidence type="ECO:0000305" key="8"/>
<evidence type="ECO:0000305" key="9">
    <source>
    </source>
</evidence>
<evidence type="ECO:0000305" key="10">
    <source>
    </source>
</evidence>
<evidence type="ECO:0000312" key="11">
    <source>
        <dbReference type="MGI" id="MGI:1932376"/>
    </source>
</evidence>
<evidence type="ECO:0007744" key="12">
    <source>
    </source>
</evidence>
<evidence type="ECO:0007829" key="13">
    <source>
        <dbReference type="PDB" id="7LEP"/>
    </source>
</evidence>
<gene>
    <name evidence="11" type="primary">Cacng8</name>
</gene>
<feature type="chain" id="PRO_0000164691" description="Voltage-dependent calcium channel gamma-8 subunit">
    <location>
        <begin position="1"/>
        <end position="423"/>
    </location>
</feature>
<feature type="transmembrane region" description="Helical" evidence="3">
    <location>
        <begin position="19"/>
        <end position="39"/>
    </location>
</feature>
<feature type="transmembrane region" description="Helical" evidence="3">
    <location>
        <begin position="127"/>
        <end position="147"/>
    </location>
</feature>
<feature type="transmembrane region" description="Helical" evidence="3">
    <location>
        <begin position="157"/>
        <end position="177"/>
    </location>
</feature>
<feature type="transmembrane region" description="Helical" evidence="3">
    <location>
        <begin position="207"/>
        <end position="227"/>
    </location>
</feature>
<feature type="transmembrane region" description="Helical" evidence="3">
    <location>
        <begin position="318"/>
        <end position="338"/>
    </location>
</feature>
<feature type="region of interest" description="Disordered" evidence="4">
    <location>
        <begin position="271"/>
        <end position="304"/>
    </location>
</feature>
<feature type="region of interest" description="Disordered" evidence="4">
    <location>
        <begin position="342"/>
        <end position="363"/>
    </location>
</feature>
<feature type="region of interest" description="Disordered" evidence="4">
    <location>
        <begin position="378"/>
        <end position="423"/>
    </location>
</feature>
<feature type="compositionally biased region" description="Low complexity" evidence="4">
    <location>
        <begin position="276"/>
        <end position="287"/>
    </location>
</feature>
<feature type="compositionally biased region" description="Pro residues" evidence="4">
    <location>
        <begin position="384"/>
        <end position="399"/>
    </location>
</feature>
<feature type="compositionally biased region" description="Polar residues" evidence="4">
    <location>
        <begin position="410"/>
        <end position="423"/>
    </location>
</feature>
<feature type="modified residue" description="Phosphoserine" evidence="12">
    <location>
        <position position="251"/>
    </location>
</feature>
<feature type="modified residue" description="Phosphoserine" evidence="12">
    <location>
        <position position="254"/>
    </location>
</feature>
<feature type="helix" evidence="13">
    <location>
        <begin position="21"/>
        <end position="40"/>
    </location>
</feature>
<feature type="strand" evidence="13">
    <location>
        <begin position="44"/>
        <end position="47"/>
    </location>
</feature>
<feature type="strand" evidence="13">
    <location>
        <begin position="86"/>
        <end position="89"/>
    </location>
</feature>
<feature type="strand" evidence="13">
    <location>
        <begin position="93"/>
        <end position="96"/>
    </location>
</feature>
<feature type="helix" evidence="13">
    <location>
        <begin position="119"/>
        <end position="126"/>
    </location>
</feature>
<feature type="helix" evidence="13">
    <location>
        <begin position="129"/>
        <end position="149"/>
    </location>
</feature>
<feature type="helix" evidence="13">
    <location>
        <begin position="157"/>
        <end position="183"/>
    </location>
</feature>
<feature type="helix" evidence="13">
    <location>
        <begin position="204"/>
        <end position="231"/>
    </location>
</feature>
<dbReference type="EMBL" id="AF361350">
    <property type="protein sequence ID" value="AAL50045.1"/>
    <property type="molecule type" value="mRNA"/>
</dbReference>
<dbReference type="CCDS" id="CCDS57471.1"/>
<dbReference type="PDB" id="7LDD">
    <property type="method" value="EM"/>
    <property type="resolution" value="3.40 A"/>
    <property type="chains" value="G/H=1-423"/>
</dbReference>
<dbReference type="PDB" id="7LDE">
    <property type="method" value="EM"/>
    <property type="resolution" value="3.90 A"/>
    <property type="chains" value="G/H=1-423"/>
</dbReference>
<dbReference type="PDB" id="7LEP">
    <property type="method" value="EM"/>
    <property type="resolution" value="3.25 A"/>
    <property type="chains" value="G/H=19-233"/>
</dbReference>
<dbReference type="PDBsum" id="7LDD"/>
<dbReference type="PDBsum" id="7LDE"/>
<dbReference type="PDBsum" id="7LEP"/>
<dbReference type="EMDB" id="EMD-23283"/>
<dbReference type="EMDB" id="EMD-23284"/>
<dbReference type="EMDB" id="EMD-23285"/>
<dbReference type="EMDB" id="EMD-23286"/>
<dbReference type="EMDB" id="EMD-23287"/>
<dbReference type="EMDB" id="EMD-23288"/>
<dbReference type="EMDB" id="EMD-23292"/>
<dbReference type="SMR" id="Q8VHW2"/>
<dbReference type="BioGRID" id="219900">
    <property type="interactions" value="3"/>
</dbReference>
<dbReference type="FunCoup" id="Q8VHW2">
    <property type="interactions" value="81"/>
</dbReference>
<dbReference type="IntAct" id="Q8VHW2">
    <property type="interactions" value="1"/>
</dbReference>
<dbReference type="STRING" id="10090.ENSMUSP00000138618"/>
<dbReference type="GlyGen" id="Q8VHW2">
    <property type="glycosylation" value="4 sites, 2 N-linked glycans (2 sites), 1 O-linked glycan (2 sites)"/>
</dbReference>
<dbReference type="iPTMnet" id="Q8VHW2"/>
<dbReference type="PhosphoSitePlus" id="Q8VHW2"/>
<dbReference type="SwissPalm" id="Q8VHW2"/>
<dbReference type="PaxDb" id="10090-ENSMUSP00000138618"/>
<dbReference type="ProteomicsDB" id="265721"/>
<dbReference type="ABCD" id="Q8VHW2">
    <property type="antibodies" value="1 sequenced antibody"/>
</dbReference>
<dbReference type="UCSC" id="uc029wda.2">
    <property type="organism name" value="mouse"/>
</dbReference>
<dbReference type="AGR" id="MGI:1932376"/>
<dbReference type="MGI" id="MGI:1932376">
    <property type="gene designation" value="Cacng8"/>
</dbReference>
<dbReference type="eggNOG" id="ENOG502QUEC">
    <property type="taxonomic scope" value="Eukaryota"/>
</dbReference>
<dbReference type="InParanoid" id="Q8VHW2"/>
<dbReference type="PhylomeDB" id="Q8VHW2"/>
<dbReference type="Reactome" id="R-MMU-399719">
    <property type="pathway name" value="Trafficking of AMPA receptors"/>
</dbReference>
<dbReference type="Reactome" id="R-MMU-5576892">
    <property type="pathway name" value="Phase 0 - rapid depolarisation"/>
</dbReference>
<dbReference type="Reactome" id="R-MMU-5576893">
    <property type="pathway name" value="Phase 2 - plateau phase"/>
</dbReference>
<dbReference type="Reactome" id="R-MMU-5682910">
    <property type="pathway name" value="LGI-ADAM interactions"/>
</dbReference>
<dbReference type="CD-CODE" id="CE726F99">
    <property type="entry name" value="Postsynaptic density"/>
</dbReference>
<dbReference type="ChiTaRS" id="Cacng8">
    <property type="organism name" value="mouse"/>
</dbReference>
<dbReference type="PRO" id="PR:Q8VHW2"/>
<dbReference type="Proteomes" id="UP000000589">
    <property type="component" value="Unplaced"/>
</dbReference>
<dbReference type="RNAct" id="Q8VHW2">
    <property type="molecule type" value="protein"/>
</dbReference>
<dbReference type="GO" id="GO:0032281">
    <property type="term" value="C:AMPA glutamate receptor complex"/>
    <property type="evidence" value="ECO:0000250"/>
    <property type="project" value="UniProtKB"/>
</dbReference>
<dbReference type="GO" id="GO:0098978">
    <property type="term" value="C:glutamatergic synapse"/>
    <property type="evidence" value="ECO:0000314"/>
    <property type="project" value="SynGO"/>
</dbReference>
<dbReference type="GO" id="GO:1990454">
    <property type="term" value="C:L-type voltage-gated calcium channel complex"/>
    <property type="evidence" value="ECO:0000314"/>
    <property type="project" value="UniProtKB"/>
</dbReference>
<dbReference type="GO" id="GO:0014069">
    <property type="term" value="C:postsynaptic density"/>
    <property type="evidence" value="ECO:0000314"/>
    <property type="project" value="UniProtKB"/>
</dbReference>
<dbReference type="GO" id="GO:0098839">
    <property type="term" value="C:postsynaptic density membrane"/>
    <property type="evidence" value="ECO:0000314"/>
    <property type="project" value="SynGO"/>
</dbReference>
<dbReference type="GO" id="GO:0098685">
    <property type="term" value="C:Schaffer collateral - CA1 synapse"/>
    <property type="evidence" value="ECO:0000314"/>
    <property type="project" value="SynGO"/>
</dbReference>
<dbReference type="GO" id="GO:0005262">
    <property type="term" value="F:calcium channel activity"/>
    <property type="evidence" value="ECO:0007669"/>
    <property type="project" value="UniProtKB-KW"/>
</dbReference>
<dbReference type="GO" id="GO:0005246">
    <property type="term" value="F:calcium channel regulator activity"/>
    <property type="evidence" value="ECO:0000314"/>
    <property type="project" value="UniProtKB"/>
</dbReference>
<dbReference type="GO" id="GO:2000311">
    <property type="term" value="P:regulation of AMPA receptor activity"/>
    <property type="evidence" value="ECO:0000314"/>
    <property type="project" value="UniProtKB"/>
</dbReference>
<dbReference type="GO" id="GO:0099072">
    <property type="term" value="P:regulation of postsynaptic membrane neurotransmitter receptor levels"/>
    <property type="evidence" value="ECO:0000314"/>
    <property type="project" value="SynGO"/>
</dbReference>
<dbReference type="FunFam" id="1.20.140.150:FF:000004">
    <property type="entry name" value="Voltage-dependent calcium channel gamma-4 subunit"/>
    <property type="match status" value="1"/>
</dbReference>
<dbReference type="Gene3D" id="1.20.140.150">
    <property type="match status" value="1"/>
</dbReference>
<dbReference type="InterPro" id="IPR051072">
    <property type="entry name" value="CACNG_subunit"/>
</dbReference>
<dbReference type="InterPro" id="IPR004031">
    <property type="entry name" value="PMP22/EMP/MP20/Claudin"/>
</dbReference>
<dbReference type="InterPro" id="IPR008372">
    <property type="entry name" value="VDCC_g8su"/>
</dbReference>
<dbReference type="InterPro" id="IPR008368">
    <property type="entry name" value="VDCC_gsu"/>
</dbReference>
<dbReference type="PANTHER" id="PTHR12107">
    <property type="entry name" value="VOLTAGE-DEPENDENT CALCIUM CHANNEL GAMMA SUBUNIT"/>
    <property type="match status" value="1"/>
</dbReference>
<dbReference type="PANTHER" id="PTHR12107:SF2">
    <property type="entry name" value="VOLTAGE-DEPENDENT CALCIUM CHANNEL GAMMA-8 SUBUNIT"/>
    <property type="match status" value="1"/>
</dbReference>
<dbReference type="Pfam" id="PF00822">
    <property type="entry name" value="PMP22_Claudin"/>
    <property type="match status" value="1"/>
</dbReference>
<dbReference type="PRINTS" id="PR01792">
    <property type="entry name" value="VDCCGAMMA"/>
</dbReference>
<dbReference type="PRINTS" id="PR01796">
    <property type="entry name" value="VDCCGAMMA8"/>
</dbReference>
<protein>
    <recommendedName>
        <fullName evidence="8">Voltage-dependent calcium channel gamma-8 subunit</fullName>
    </recommendedName>
    <alternativeName>
        <fullName>Neuronal voltage-gated calcium channel gamma-8 subunit</fullName>
    </alternativeName>
    <alternativeName>
        <fullName>Transmembrane AMPAR regulatory protein gamma-8</fullName>
        <shortName>TARP gamma-8</shortName>
    </alternativeName>
</protein>
<sequence length="423" mass="43453">MESLKRWNEERGLWCEKGVQVLLTTIGAFSAFGLMTIAISTDYWLYTRALICNTTNLTAGDDGPPHRGGSGSSEKKDPGGLTHSGLWRICCLEGLKRGVCVKINHFPEDTDYDHDSAEYLLRVVRASSIFPILSAILLLLGGVCVAASRVYKSKRNIILGAGILFVAAGLSNIIGVIVYISANAGEPGPKRDEEKKNHYSYGWSFYFGGLSFILAEVIGVLAVNIYIERSREAHCQSRSDLLKAGGGAGGSGGSGPSAILRLPSYRFRYRRRSRSSSRGSSEASPSRDASPGGPGGPGFASTDISMYTLSRDPSKGSVAAGLASAGGGGSGAGVGAYGGAAGAAGGGGAGSERDRGSSAGFLTLHNAFPKEAASGVTVTVTGPPAAPAPAPAPPAPAAPAPGTLSKEAAASNTNTLNRKTTPV</sequence>
<proteinExistence type="evidence at protein level"/>